<organism>
    <name type="scientific">Mus musculus</name>
    <name type="common">Mouse</name>
    <dbReference type="NCBI Taxonomy" id="10090"/>
    <lineage>
        <taxon>Eukaryota</taxon>
        <taxon>Metazoa</taxon>
        <taxon>Chordata</taxon>
        <taxon>Craniata</taxon>
        <taxon>Vertebrata</taxon>
        <taxon>Euteleostomi</taxon>
        <taxon>Mammalia</taxon>
        <taxon>Eutheria</taxon>
        <taxon>Euarchontoglires</taxon>
        <taxon>Glires</taxon>
        <taxon>Rodentia</taxon>
        <taxon>Myomorpha</taxon>
        <taxon>Muroidea</taxon>
        <taxon>Muridae</taxon>
        <taxon>Murinae</taxon>
        <taxon>Mus</taxon>
        <taxon>Mus</taxon>
    </lineage>
</organism>
<gene>
    <name evidence="23 24" type="primary">Rdh5</name>
    <name evidence="12" type="synonym">cRDH</name>
    <name evidence="22" type="synonym">rdh</name>
    <name evidence="13" type="synonym">Rdh4</name>
</gene>
<evidence type="ECO:0000250" key="1"/>
<evidence type="ECO:0000250" key="2">
    <source>
        <dbReference type="UniProtKB" id="Q27979"/>
    </source>
</evidence>
<evidence type="ECO:0000250" key="3">
    <source>
        <dbReference type="UniProtKB" id="Q92781"/>
    </source>
</evidence>
<evidence type="ECO:0000255" key="4"/>
<evidence type="ECO:0000269" key="5">
    <source>
    </source>
</evidence>
<evidence type="ECO:0000269" key="6">
    <source>
    </source>
</evidence>
<evidence type="ECO:0000269" key="7">
    <source>
    </source>
</evidence>
<evidence type="ECO:0000269" key="8">
    <source>
    </source>
</evidence>
<evidence type="ECO:0000269" key="9">
    <source>
    </source>
</evidence>
<evidence type="ECO:0000269" key="10">
    <source>
    </source>
</evidence>
<evidence type="ECO:0000269" key="11">
    <source>
    </source>
</evidence>
<evidence type="ECO:0000303" key="12">
    <source>
    </source>
</evidence>
<evidence type="ECO:0000303" key="13">
    <source>
    </source>
</evidence>
<evidence type="ECO:0000303" key="14">
    <source>
    </source>
</evidence>
<evidence type="ECO:0000303" key="15">
    <source>
    </source>
</evidence>
<evidence type="ECO:0000305" key="16"/>
<evidence type="ECO:0000312" key="17">
    <source>
        <dbReference type="EMBL" id="AAC00491.1"/>
    </source>
</evidence>
<evidence type="ECO:0000312" key="18">
    <source>
        <dbReference type="EMBL" id="AAC00492.1"/>
    </source>
</evidence>
<evidence type="ECO:0000312" key="19">
    <source>
        <dbReference type="EMBL" id="AAC25951.1"/>
    </source>
</evidence>
<evidence type="ECO:0000312" key="20">
    <source>
        <dbReference type="EMBL" id="AAH21372.1"/>
    </source>
</evidence>
<evidence type="ECO:0000312" key="21">
    <source>
        <dbReference type="EMBL" id="BAE22435.1"/>
    </source>
</evidence>
<evidence type="ECO:0000312" key="22">
    <source>
        <dbReference type="EMBL" id="CAA66347.1"/>
    </source>
</evidence>
<evidence type="ECO:0000312" key="23">
    <source>
        <dbReference type="EMBL" id="EDL24632.1"/>
    </source>
</evidence>
<evidence type="ECO:0000312" key="24">
    <source>
        <dbReference type="MGI" id="MGI:1201412"/>
    </source>
</evidence>
<feature type="chain" id="PRO_0000419633" description="Retinol dehydrogenase 5" evidence="4">
    <location>
        <begin position="1"/>
        <end position="318"/>
    </location>
</feature>
<feature type="transmembrane region" description="Helical" evidence="4">
    <location>
        <begin position="1"/>
        <end position="23"/>
    </location>
</feature>
<feature type="topological domain" description="Lumenal" evidence="9">
    <location>
        <begin position="24"/>
        <end position="288"/>
    </location>
</feature>
<feature type="transmembrane region" description="Helical" evidence="4">
    <location>
        <begin position="289"/>
        <end position="309"/>
    </location>
</feature>
<feature type="topological domain" description="Cytoplasmic" evidence="16">
    <location>
        <begin position="310"/>
        <end position="318"/>
    </location>
</feature>
<feature type="active site" description="Proton acceptor" evidence="3">
    <location>
        <position position="175"/>
    </location>
</feature>
<feature type="binding site" evidence="1">
    <location>
        <begin position="32"/>
        <end position="56"/>
    </location>
    <ligand>
        <name>NADP(+)</name>
        <dbReference type="ChEBI" id="CHEBI:58349"/>
    </ligand>
</feature>
<feature type="binding site" evidence="1">
    <location>
        <position position="163"/>
    </location>
    <ligand>
        <name>substrate</name>
    </ligand>
</feature>
<name>RDH5_MOUSE</name>
<comment type="function">
    <text evidence="2 3 5 10">Catalyzes the oxidation of cis-isomers of retinol, including 11-cis-, 9-cis-, and 13-cis-retinol in an NAD-dependent manner (PubMed:10588954, PubMed:9539749). Has no activity towards all-trans retinal (By similarity). Plays a significant role in 11-cis retinol oxidation in the retinal pigment epithelium cells (RPE). Also recognizes steroids (androsterone, androstanediol) as its substrates (By similarity).</text>
</comment>
<comment type="catalytic activity">
    <reaction evidence="5">
        <text>11-cis-retinol + NAD(+) = 11-cis-retinal + NADH + H(+)</text>
        <dbReference type="Rhea" id="RHEA:42060"/>
        <dbReference type="ChEBI" id="CHEBI:15378"/>
        <dbReference type="ChEBI" id="CHEBI:16066"/>
        <dbReference type="ChEBI" id="CHEBI:16302"/>
        <dbReference type="ChEBI" id="CHEBI:57540"/>
        <dbReference type="ChEBI" id="CHEBI:57945"/>
        <dbReference type="EC" id="1.1.1.315"/>
    </reaction>
</comment>
<comment type="catalytic activity">
    <reaction evidence="5 8 10">
        <text>9-cis-retinol + NAD(+) = 9-cis-retinal + NADH + H(+)</text>
        <dbReference type="Rhea" id="RHEA:42052"/>
        <dbReference type="ChEBI" id="CHEBI:15378"/>
        <dbReference type="ChEBI" id="CHEBI:57540"/>
        <dbReference type="ChEBI" id="CHEBI:57945"/>
        <dbReference type="ChEBI" id="CHEBI:78272"/>
        <dbReference type="ChEBI" id="CHEBI:78273"/>
    </reaction>
</comment>
<comment type="catalytic activity">
    <reaction evidence="5">
        <text>13-cis-retinol + NAD(+) = 13-cis-retinal + NADH + H(+)</text>
        <dbReference type="Rhea" id="RHEA:42056"/>
        <dbReference type="ChEBI" id="CHEBI:15378"/>
        <dbReference type="ChEBI" id="CHEBI:45479"/>
        <dbReference type="ChEBI" id="CHEBI:45487"/>
        <dbReference type="ChEBI" id="CHEBI:57540"/>
        <dbReference type="ChEBI" id="CHEBI:57945"/>
    </reaction>
</comment>
<comment type="catalytic activity">
    <reaction evidence="3">
        <text>androsterone + NAD(+) = 5alpha-androstan-3,17-dione + NADH + H(+)</text>
        <dbReference type="Rhea" id="RHEA:20381"/>
        <dbReference type="ChEBI" id="CHEBI:15378"/>
        <dbReference type="ChEBI" id="CHEBI:15994"/>
        <dbReference type="ChEBI" id="CHEBI:16032"/>
        <dbReference type="ChEBI" id="CHEBI:57540"/>
        <dbReference type="ChEBI" id="CHEBI:57945"/>
        <dbReference type="EC" id="1.1.1.209"/>
    </reaction>
</comment>
<comment type="catalytic activity">
    <reaction evidence="3">
        <text>5alpha-androstane-3alpha,17beta-diol + NAD(+) = 17beta-hydroxy-5alpha-androstan-3-one + NADH + H(+)</text>
        <dbReference type="Rhea" id="RHEA:42004"/>
        <dbReference type="ChEBI" id="CHEBI:15378"/>
        <dbReference type="ChEBI" id="CHEBI:16330"/>
        <dbReference type="ChEBI" id="CHEBI:36713"/>
        <dbReference type="ChEBI" id="CHEBI:57540"/>
        <dbReference type="ChEBI" id="CHEBI:57945"/>
        <dbReference type="EC" id="1.1.1.53"/>
    </reaction>
</comment>
<comment type="activity regulation">
    <text evidence="5">Inhibited by 9-cis-, 13-cis- and all-trans-retinoic acids, with the most potent inhibitor being 13-cis-retinoic acid. Weakly inhibited by oleic acid.</text>
</comment>
<comment type="pathway">
    <text evidence="14">Cofactor metabolism; retinol metabolism.</text>
</comment>
<comment type="subunit">
    <text evidence="3">Homodimer.</text>
</comment>
<comment type="subcellular location">
    <subcellularLocation>
        <location evidence="6 8">Endoplasmic reticulum membrane</location>
        <topology evidence="4">Multi-pass membrane protein</topology>
        <orientation evidence="6 8 9">Lumenal side</orientation>
    </subcellularLocation>
</comment>
<comment type="tissue specificity">
    <text evidence="5 6 10 11">Expressed in eye, liver, kidney, brain, intestine, placenta, epididymus and submaxillary gland. In eye, strongly expressed in the retinal pigment epithelium, with lower expression levels detected in the inner segment of the photoreceptor cells and in the outer plexiform layer. In kidney, strong expression detected in the distal tubules and the transitional epithelium in the renal pelvis, with weaker expression detected in the epithelium of the outer stripe of the outer zone of the medulla. In liver, detected in hepatocytes in the centrilobular area. In lung, present in club cells in the epithelium of the bronchiole, in parenchyma and in cartilage surrounding the secondary bronchi. In skin, expressed in epidermis, hair follicles and mast cells in the dermis. Expressed in heart (PubMed:10588954, PubMed:10739682). Not detected in heart (PubMed:9539749). Not detected in lung, spleen, skeletal muscle and testis.</text>
</comment>
<comment type="developmental stage">
    <text evidence="6 10">Abundantly expressed during embryonic development, especially in the developing central nervous system and sensory organs, cranial and spinal ganglia and endoderm of foregut and hindgut. At 10 dpc, detected along the entire neural tube, the mid- and hindbrain floor, the central canal of the brain vesicles, spinal cord, lung mesenchyme, the trabecular layer of the heart ventricles, endoderm and endodermally-derived structures such as tracheal epithelium and liver. At 11 dpc, expressed in the brain vesicles, along the spinal cord, myotome, migrating muscle progenitor cells in the body wall, cells of the genital ridge, spinal ganglion, liver, cerebellar primordium, basal cells of the neuroepithelium of the mesenchephalic flexure, collections of cells in the pons, Rathke's pouch, spinal and cranial ganglia and the floor plate, retina, lens, optic stalks and the neural crest-derived mesenchyme in the anterior eye segment. During eye development, expression restricted to the retinal pigment epithelium of the posterior hemisphere at 18 dpc, with expression levels increasing postnatally to P16.</text>
</comment>
<comment type="domain">
    <text evidence="8">The last 8 amino acids of the C-terminal tail are important for a proper localization as well as for the in vivo enzymatic activity.</text>
</comment>
<comment type="disruption phenotype">
    <text evidence="7">Mutant mice develop normally and are fertile. No abnormalities can be found in the retinal structure, rhodopsin content and fundus appearance of their eyes. Mice display a mild visual phenotype of impaired dark adaptation and accumulation of 11-cis- and 13-cis-retinols and 11-cis- and 13-cis-retinyl esters in the eyes.</text>
</comment>
<comment type="similarity">
    <text evidence="4">Belongs to the short-chain dehydrogenases/reductases (SDR) family.</text>
</comment>
<protein>
    <recommendedName>
        <fullName>Retinol dehydrogenase 5</fullName>
        <ecNumber evidence="3">1.1.1.209</ecNumber>
        <ecNumber evidence="5">1.1.1.315</ecNumber>
        <ecNumber evidence="3">1.1.1.53</ecNumber>
    </recommendedName>
    <alternativeName>
        <fullName evidence="22">11-cis retinol dehydrogenase</fullName>
        <shortName evidence="2">11-cis RDH</shortName>
        <shortName evidence="15">11-cis RoDH</shortName>
    </alternativeName>
    <alternativeName>
        <fullName evidence="19">9-cis retinol dehydrogenase</fullName>
    </alternativeName>
    <alternativeName>
        <fullName evidence="12">Cis-retinol dehydrogenase</fullName>
    </alternativeName>
</protein>
<reference evidence="11 22" key="1">
    <citation type="journal article" date="1998" name="FEBS Lett.">
        <title>The visual cycle retinol dehydrogenase: possible involvement in the 9-cis retinoic acid biosynthetic pathway.</title>
        <authorList>
            <person name="Driessen C.A."/>
            <person name="Winkens H.J."/>
            <person name="Kuhlmann E.D."/>
            <person name="Janssen A.P."/>
            <person name="van Vugt A.H."/>
            <person name="Deutman A.F."/>
            <person name="Janssen J.J."/>
        </authorList>
    </citation>
    <scope>NUCLEOTIDE SEQUENCE [GENOMIC DNA]</scope>
    <scope>TISSUE SPECIFICITY</scope>
    <source>
        <strain evidence="22">129/SvJ</strain>
        <tissue evidence="11">Liver</tissue>
    </source>
</reference>
<reference evidence="10 19" key="2">
    <citation type="journal article" date="1998" name="Proc. Natl. Acad. Sci. U.S.A.">
        <title>The identification of a 9-cis retinol dehydrogenase in the mouse embryo reveals a pathway for synthesis of 9-cis retinoic acid.</title>
        <authorList>
            <person name="Romert A."/>
            <person name="Tuvendal P."/>
            <person name="Simon A."/>
            <person name="Dencker L."/>
            <person name="Eriksson U."/>
        </authorList>
    </citation>
    <scope>NUCLEOTIDE SEQUENCE [MRNA]</scope>
    <scope>FUNCTION</scope>
    <scope>CATALYTIC ACTIVITY</scope>
    <scope>PATHWAY</scope>
    <scope>TISSUE SPECIFICITY</scope>
    <scope>DEVELOPMENTAL STAGE</scope>
    <source>
        <tissue evidence="19">Liver</tissue>
    </source>
</reference>
<reference evidence="5 17" key="3">
    <citation type="journal article" date="1999" name="J. Lipid Res.">
        <title>Biochemical properties, tissue expression, and gene structure of a short chain dehydrogenase/reductase able to catalyze cis-retinol oxidation.</title>
        <authorList>
            <person name="Gamble M.V."/>
            <person name="Shang E."/>
            <person name="Zott R.P."/>
            <person name="Mertz J.R."/>
            <person name="Wolgemuth D.J."/>
            <person name="Blaner W.S."/>
        </authorList>
    </citation>
    <scope>NUCLEOTIDE SEQUENCE [GENOMIC DNA / MRNA]</scope>
    <scope>FUNCTION</scope>
    <scope>CATALYTIC ACTIVITY</scope>
    <scope>ACTIVITY REGULATION</scope>
    <scope>TISSUE SPECIFICITY</scope>
    <source>
        <strain evidence="5">129/SvJ</strain>
        <strain evidence="17">BALB/cJ</strain>
        <strain evidence="18">C57BL/6J</strain>
        <tissue evidence="17">Kidney</tissue>
        <tissue evidence="18">Liver</tissue>
    </source>
</reference>
<reference evidence="21" key="4">
    <citation type="journal article" date="2005" name="Science">
        <title>The transcriptional landscape of the mammalian genome.</title>
        <authorList>
            <person name="Carninci P."/>
            <person name="Kasukawa T."/>
            <person name="Katayama S."/>
            <person name="Gough J."/>
            <person name="Frith M.C."/>
            <person name="Maeda N."/>
            <person name="Oyama R."/>
            <person name="Ravasi T."/>
            <person name="Lenhard B."/>
            <person name="Wells C."/>
            <person name="Kodzius R."/>
            <person name="Shimokawa K."/>
            <person name="Bajic V.B."/>
            <person name="Brenner S.E."/>
            <person name="Batalov S."/>
            <person name="Forrest A.R."/>
            <person name="Zavolan M."/>
            <person name="Davis M.J."/>
            <person name="Wilming L.G."/>
            <person name="Aidinis V."/>
            <person name="Allen J.E."/>
            <person name="Ambesi-Impiombato A."/>
            <person name="Apweiler R."/>
            <person name="Aturaliya R.N."/>
            <person name="Bailey T.L."/>
            <person name="Bansal M."/>
            <person name="Baxter L."/>
            <person name="Beisel K.W."/>
            <person name="Bersano T."/>
            <person name="Bono H."/>
            <person name="Chalk A.M."/>
            <person name="Chiu K.P."/>
            <person name="Choudhary V."/>
            <person name="Christoffels A."/>
            <person name="Clutterbuck D.R."/>
            <person name="Crowe M.L."/>
            <person name="Dalla E."/>
            <person name="Dalrymple B.P."/>
            <person name="de Bono B."/>
            <person name="Della Gatta G."/>
            <person name="di Bernardo D."/>
            <person name="Down T."/>
            <person name="Engstrom P."/>
            <person name="Fagiolini M."/>
            <person name="Faulkner G."/>
            <person name="Fletcher C.F."/>
            <person name="Fukushima T."/>
            <person name="Furuno M."/>
            <person name="Futaki S."/>
            <person name="Gariboldi M."/>
            <person name="Georgii-Hemming P."/>
            <person name="Gingeras T.R."/>
            <person name="Gojobori T."/>
            <person name="Green R.E."/>
            <person name="Gustincich S."/>
            <person name="Harbers M."/>
            <person name="Hayashi Y."/>
            <person name="Hensch T.K."/>
            <person name="Hirokawa N."/>
            <person name="Hill D."/>
            <person name="Huminiecki L."/>
            <person name="Iacono M."/>
            <person name="Ikeo K."/>
            <person name="Iwama A."/>
            <person name="Ishikawa T."/>
            <person name="Jakt M."/>
            <person name="Kanapin A."/>
            <person name="Katoh M."/>
            <person name="Kawasawa Y."/>
            <person name="Kelso J."/>
            <person name="Kitamura H."/>
            <person name="Kitano H."/>
            <person name="Kollias G."/>
            <person name="Krishnan S.P."/>
            <person name="Kruger A."/>
            <person name="Kummerfeld S.K."/>
            <person name="Kurochkin I.V."/>
            <person name="Lareau L.F."/>
            <person name="Lazarevic D."/>
            <person name="Lipovich L."/>
            <person name="Liu J."/>
            <person name="Liuni S."/>
            <person name="McWilliam S."/>
            <person name="Madan Babu M."/>
            <person name="Madera M."/>
            <person name="Marchionni L."/>
            <person name="Matsuda H."/>
            <person name="Matsuzawa S."/>
            <person name="Miki H."/>
            <person name="Mignone F."/>
            <person name="Miyake S."/>
            <person name="Morris K."/>
            <person name="Mottagui-Tabar S."/>
            <person name="Mulder N."/>
            <person name="Nakano N."/>
            <person name="Nakauchi H."/>
            <person name="Ng P."/>
            <person name="Nilsson R."/>
            <person name="Nishiguchi S."/>
            <person name="Nishikawa S."/>
            <person name="Nori F."/>
            <person name="Ohara O."/>
            <person name="Okazaki Y."/>
            <person name="Orlando V."/>
            <person name="Pang K.C."/>
            <person name="Pavan W.J."/>
            <person name="Pavesi G."/>
            <person name="Pesole G."/>
            <person name="Petrovsky N."/>
            <person name="Piazza S."/>
            <person name="Reed J."/>
            <person name="Reid J.F."/>
            <person name="Ring B.Z."/>
            <person name="Ringwald M."/>
            <person name="Rost B."/>
            <person name="Ruan Y."/>
            <person name="Salzberg S.L."/>
            <person name="Sandelin A."/>
            <person name="Schneider C."/>
            <person name="Schoenbach C."/>
            <person name="Sekiguchi K."/>
            <person name="Semple C.A."/>
            <person name="Seno S."/>
            <person name="Sessa L."/>
            <person name="Sheng Y."/>
            <person name="Shibata Y."/>
            <person name="Shimada H."/>
            <person name="Shimada K."/>
            <person name="Silva D."/>
            <person name="Sinclair B."/>
            <person name="Sperling S."/>
            <person name="Stupka E."/>
            <person name="Sugiura K."/>
            <person name="Sultana R."/>
            <person name="Takenaka Y."/>
            <person name="Taki K."/>
            <person name="Tammoja K."/>
            <person name="Tan S.L."/>
            <person name="Tang S."/>
            <person name="Taylor M.S."/>
            <person name="Tegner J."/>
            <person name="Teichmann S.A."/>
            <person name="Ueda H.R."/>
            <person name="van Nimwegen E."/>
            <person name="Verardo R."/>
            <person name="Wei C.L."/>
            <person name="Yagi K."/>
            <person name="Yamanishi H."/>
            <person name="Zabarovsky E."/>
            <person name="Zhu S."/>
            <person name="Zimmer A."/>
            <person name="Hide W."/>
            <person name="Bult C."/>
            <person name="Grimmond S.M."/>
            <person name="Teasdale R.D."/>
            <person name="Liu E.T."/>
            <person name="Brusic V."/>
            <person name="Quackenbush J."/>
            <person name="Wahlestedt C."/>
            <person name="Mattick J.S."/>
            <person name="Hume D.A."/>
            <person name="Kai C."/>
            <person name="Sasaki D."/>
            <person name="Tomaru Y."/>
            <person name="Fukuda S."/>
            <person name="Kanamori-Katayama M."/>
            <person name="Suzuki M."/>
            <person name="Aoki J."/>
            <person name="Arakawa T."/>
            <person name="Iida J."/>
            <person name="Imamura K."/>
            <person name="Itoh M."/>
            <person name="Kato T."/>
            <person name="Kawaji H."/>
            <person name="Kawagashira N."/>
            <person name="Kawashima T."/>
            <person name="Kojima M."/>
            <person name="Kondo S."/>
            <person name="Konno H."/>
            <person name="Nakano K."/>
            <person name="Ninomiya N."/>
            <person name="Nishio T."/>
            <person name="Okada M."/>
            <person name="Plessy C."/>
            <person name="Shibata K."/>
            <person name="Shiraki T."/>
            <person name="Suzuki S."/>
            <person name="Tagami M."/>
            <person name="Waki K."/>
            <person name="Watahiki A."/>
            <person name="Okamura-Oho Y."/>
            <person name="Suzuki H."/>
            <person name="Kawai J."/>
            <person name="Hayashizaki Y."/>
        </authorList>
    </citation>
    <scope>NUCLEOTIDE SEQUENCE [LARGE SCALE MRNA]</scope>
    <source>
        <strain evidence="21">C57BL/6J</strain>
        <tissue evidence="21">Cerebellum</tissue>
    </source>
</reference>
<reference key="5">
    <citation type="journal article" date="2009" name="PLoS Biol.">
        <title>Lineage-specific biology revealed by a finished genome assembly of the mouse.</title>
        <authorList>
            <person name="Church D.M."/>
            <person name="Goodstadt L."/>
            <person name="Hillier L.W."/>
            <person name="Zody M.C."/>
            <person name="Goldstein S."/>
            <person name="She X."/>
            <person name="Bult C.J."/>
            <person name="Agarwala R."/>
            <person name="Cherry J.L."/>
            <person name="DiCuccio M."/>
            <person name="Hlavina W."/>
            <person name="Kapustin Y."/>
            <person name="Meric P."/>
            <person name="Maglott D."/>
            <person name="Birtle Z."/>
            <person name="Marques A.C."/>
            <person name="Graves T."/>
            <person name="Zhou S."/>
            <person name="Teague B."/>
            <person name="Potamousis K."/>
            <person name="Churas C."/>
            <person name="Place M."/>
            <person name="Herschleb J."/>
            <person name="Runnheim R."/>
            <person name="Forrest D."/>
            <person name="Amos-Landgraf J."/>
            <person name="Schwartz D.C."/>
            <person name="Cheng Z."/>
            <person name="Lindblad-Toh K."/>
            <person name="Eichler E.E."/>
            <person name="Ponting C.P."/>
        </authorList>
    </citation>
    <scope>NUCLEOTIDE SEQUENCE [LARGE SCALE GENOMIC DNA]</scope>
    <source>
        <strain>C57BL/6J</strain>
    </source>
</reference>
<reference evidence="23" key="6">
    <citation type="submission" date="2005-07" db="EMBL/GenBank/DDBJ databases">
        <authorList>
            <person name="Mural R.J."/>
            <person name="Adams M.D."/>
            <person name="Myers E.W."/>
            <person name="Smith H.O."/>
            <person name="Venter J.C."/>
        </authorList>
    </citation>
    <scope>NUCLEOTIDE SEQUENCE [LARGE SCALE GENOMIC DNA]</scope>
</reference>
<reference evidence="20" key="7">
    <citation type="journal article" date="2004" name="Genome Res.">
        <title>The status, quality, and expansion of the NIH full-length cDNA project: the Mammalian Gene Collection (MGC).</title>
        <authorList>
            <consortium name="The MGC Project Team"/>
        </authorList>
    </citation>
    <scope>NUCLEOTIDE SEQUENCE [LARGE SCALE MRNA]</scope>
    <source>
        <strain evidence="20">FVB/N</strain>
        <tissue evidence="20">Kidney</tissue>
    </source>
</reference>
<reference evidence="6" key="8">
    <citation type="journal article" date="2000" name="Exp. Cell Res.">
        <title>Gene structure, expression analysis, and membrane topology of RDH4.</title>
        <authorList>
            <person name="Romert A."/>
            <person name="Tuvendal P."/>
            <person name="Tryggvason K."/>
            <person name="Dencker L."/>
            <person name="Eriksson U."/>
        </authorList>
    </citation>
    <scope>SUBCELLULAR LOCATION</scope>
    <scope>TISSUE SPECIFICITY</scope>
    <scope>DEVELOPMENTAL STAGE</scope>
    <scope>TOPOLOGY</scope>
</reference>
<reference evidence="7" key="9">
    <citation type="journal article" date="2000" name="Mol. Cell. Biol.">
        <title>Disruption of the 11-cis-retinol dehydrogenase gene leads to accumulation of cis-retinols and cis-retinyl esters.</title>
        <authorList>
            <person name="Driessen C.A."/>
            <person name="Winkens H.J."/>
            <person name="Hoffmann K."/>
            <person name="Kuhlmann L.D."/>
            <person name="Janssen B.P."/>
            <person name="Van Vugt A.H."/>
            <person name="Van Hooser J.P."/>
            <person name="Wieringa B.E."/>
            <person name="Deutman A.F."/>
            <person name="Palczewski K."/>
            <person name="Ruether K."/>
            <person name="Janssen J.J."/>
        </authorList>
    </citation>
    <scope>DISRUPTION PHENOTYPE</scope>
</reference>
<reference key="10">
    <citation type="journal article" date="2001" name="J. Biol. Chem.">
        <title>Biosynthesis of 9-cis-retinoic acid in vivo. The roles of different retinol dehydrogenases and a structure-activity analysis of microsomal retinol dehydrogenases.</title>
        <authorList>
            <person name="Tryggvason K."/>
            <person name="Romert A."/>
            <person name="Eriksson U."/>
        </authorList>
    </citation>
    <scope>TOPOLOGY</scope>
    <scope>SUBCELLULAR LOCATION</scope>
    <scope>DOMAIN</scope>
</reference>
<reference key="11">
    <citation type="journal article" date="2005" name="Exp. Cell Res.">
        <title>The C-terminal region of cis-retinol/androgen dehydrogenase 1 (CRAD1) confers ER localization and in vivo enzymatic function.</title>
        <authorList>
            <person name="Liden M."/>
            <person name="Tryggvason K."/>
            <person name="Eriksson U."/>
        </authorList>
    </citation>
    <scope>SUBCELLULAR LOCATION</scope>
</reference>
<keyword id="KW-0256">Endoplasmic reticulum</keyword>
<keyword id="KW-0443">Lipid metabolism</keyword>
<keyword id="KW-0472">Membrane</keyword>
<keyword id="KW-0520">NAD</keyword>
<keyword id="KW-0560">Oxidoreductase</keyword>
<keyword id="KW-1185">Reference proteome</keyword>
<keyword id="KW-0716">Sensory transduction</keyword>
<keyword id="KW-0753">Steroid metabolism</keyword>
<keyword id="KW-0812">Transmembrane</keyword>
<keyword id="KW-1133">Transmembrane helix</keyword>
<keyword id="KW-0844">Vision</keyword>
<dbReference type="EC" id="1.1.1.209" evidence="3"/>
<dbReference type="EC" id="1.1.1.315" evidence="5"/>
<dbReference type="EC" id="1.1.1.53" evidence="3"/>
<dbReference type="EMBL" id="X97752">
    <property type="protein sequence ID" value="CAA66347.1"/>
    <property type="molecule type" value="Genomic_DNA"/>
</dbReference>
<dbReference type="EMBL" id="AF013288">
    <property type="protein sequence ID" value="AAC25951.1"/>
    <property type="molecule type" value="mRNA"/>
</dbReference>
<dbReference type="EMBL" id="AF033195">
    <property type="protein sequence ID" value="AAC00491.1"/>
    <property type="molecule type" value="mRNA"/>
</dbReference>
<dbReference type="EMBL" id="AF033196">
    <property type="protein sequence ID" value="AAC00492.1"/>
    <property type="molecule type" value="mRNA"/>
</dbReference>
<dbReference type="EMBL" id="AK135139">
    <property type="protein sequence ID" value="BAE22435.1"/>
    <property type="molecule type" value="mRNA"/>
</dbReference>
<dbReference type="EMBL" id="AC122380">
    <property type="status" value="NOT_ANNOTATED_CDS"/>
    <property type="molecule type" value="Genomic_DNA"/>
</dbReference>
<dbReference type="EMBL" id="CH466578">
    <property type="protein sequence ID" value="EDL24632.1"/>
    <property type="molecule type" value="Genomic_DNA"/>
</dbReference>
<dbReference type="EMBL" id="BC021372">
    <property type="protein sequence ID" value="AAH21372.1"/>
    <property type="molecule type" value="mRNA"/>
</dbReference>
<dbReference type="CCDS" id="CCDS24298.1"/>
<dbReference type="RefSeq" id="NP_001345456.1">
    <property type="nucleotide sequence ID" value="NM_001358527.2"/>
</dbReference>
<dbReference type="RefSeq" id="NP_598767.1">
    <property type="nucleotide sequence ID" value="NM_134006.6"/>
</dbReference>
<dbReference type="RefSeq" id="XP_006513450.1">
    <property type="nucleotide sequence ID" value="XM_006513387.2"/>
</dbReference>
<dbReference type="SMR" id="O55240"/>
<dbReference type="BioGRID" id="202843">
    <property type="interactions" value="1"/>
</dbReference>
<dbReference type="FunCoup" id="O55240">
    <property type="interactions" value="247"/>
</dbReference>
<dbReference type="STRING" id="10090.ENSMUSP00000026406"/>
<dbReference type="SwissLipids" id="SLP:000000798"/>
<dbReference type="GlyGen" id="O55240">
    <property type="glycosylation" value="2 sites, 1 N-linked glycan (1 site)"/>
</dbReference>
<dbReference type="iPTMnet" id="O55240"/>
<dbReference type="PhosphoSitePlus" id="O55240"/>
<dbReference type="PaxDb" id="10090-ENSMUSP00000026406"/>
<dbReference type="PeptideAtlas" id="O55240"/>
<dbReference type="ProteomicsDB" id="253191"/>
<dbReference type="Antibodypedia" id="27694">
    <property type="antibodies" value="98 antibodies from 27 providers"/>
</dbReference>
<dbReference type="DNASU" id="19682"/>
<dbReference type="Ensembl" id="ENSMUST00000026406.14">
    <property type="protein sequence ID" value="ENSMUSP00000026406.8"/>
    <property type="gene ID" value="ENSMUSG00000025350.16"/>
</dbReference>
<dbReference type="GeneID" id="19682"/>
<dbReference type="KEGG" id="mmu:19682"/>
<dbReference type="UCSC" id="uc007how.1">
    <property type="organism name" value="mouse"/>
</dbReference>
<dbReference type="AGR" id="MGI:1201412"/>
<dbReference type="CTD" id="5959"/>
<dbReference type="MGI" id="MGI:1201412">
    <property type="gene designation" value="Rdh5"/>
</dbReference>
<dbReference type="VEuPathDB" id="HostDB:ENSMUSG00000025350"/>
<dbReference type="eggNOG" id="KOG1610">
    <property type="taxonomic scope" value="Eukaryota"/>
</dbReference>
<dbReference type="GeneTree" id="ENSGT00940000161168"/>
<dbReference type="InParanoid" id="O55240"/>
<dbReference type="OMA" id="WEDFHQV"/>
<dbReference type="OrthoDB" id="5296at2759"/>
<dbReference type="PhylomeDB" id="O55240"/>
<dbReference type="TreeFam" id="TF325617"/>
<dbReference type="BRENDA" id="1.1.1.105">
    <property type="organism ID" value="3474"/>
</dbReference>
<dbReference type="Reactome" id="R-MMU-2453902">
    <property type="pathway name" value="The canonical retinoid cycle in rods (twilight vision)"/>
</dbReference>
<dbReference type="Reactome" id="R-MMU-5365859">
    <property type="pathway name" value="RA biosynthesis pathway"/>
</dbReference>
<dbReference type="UniPathway" id="UPA00912"/>
<dbReference type="BioGRID-ORCS" id="19682">
    <property type="hits" value="1 hit in 82 CRISPR screens"/>
</dbReference>
<dbReference type="PRO" id="PR:O55240"/>
<dbReference type="Proteomes" id="UP000000589">
    <property type="component" value="Chromosome 10"/>
</dbReference>
<dbReference type="RNAct" id="O55240">
    <property type="molecule type" value="protein"/>
</dbReference>
<dbReference type="Bgee" id="ENSMUSG00000025350">
    <property type="expression patterns" value="Expressed in choroid plexus of fourth ventricle and 163 other cell types or tissues"/>
</dbReference>
<dbReference type="ExpressionAtlas" id="O55240">
    <property type="expression patterns" value="baseline and differential"/>
</dbReference>
<dbReference type="GO" id="GO:0044297">
    <property type="term" value="C:cell body"/>
    <property type="evidence" value="ECO:0007669"/>
    <property type="project" value="Ensembl"/>
</dbReference>
<dbReference type="GO" id="GO:0005788">
    <property type="term" value="C:endoplasmic reticulum lumen"/>
    <property type="evidence" value="ECO:0000314"/>
    <property type="project" value="UniProtKB"/>
</dbReference>
<dbReference type="GO" id="GO:0005789">
    <property type="term" value="C:endoplasmic reticulum membrane"/>
    <property type="evidence" value="ECO:0000250"/>
    <property type="project" value="UniProtKB"/>
</dbReference>
<dbReference type="GO" id="GO:0106429">
    <property type="term" value="F:11-cis-retinol dehydrogenase"/>
    <property type="evidence" value="ECO:0007669"/>
    <property type="project" value="UniProtKB-EC"/>
</dbReference>
<dbReference type="GO" id="GO:0004745">
    <property type="term" value="F:all-trans-retinol dehydrogenase (NAD+) activity"/>
    <property type="evidence" value="ECO:0000314"/>
    <property type="project" value="UniProtKB"/>
</dbReference>
<dbReference type="GO" id="GO:0047044">
    <property type="term" value="F:androstan-3-alpha,17-beta-diol dehydrogenase (NAD+) activity"/>
    <property type="evidence" value="ECO:0000250"/>
    <property type="project" value="UniProtKB"/>
</dbReference>
<dbReference type="GO" id="GO:0047023">
    <property type="term" value="F:androsterone dehydrogenase [NAD(P)+] activity"/>
    <property type="evidence" value="ECO:0000250"/>
    <property type="project" value="UniProtKB"/>
</dbReference>
<dbReference type="GO" id="GO:0042803">
    <property type="term" value="F:protein homodimerization activity"/>
    <property type="evidence" value="ECO:0000250"/>
    <property type="project" value="UniProtKB"/>
</dbReference>
<dbReference type="GO" id="GO:0001523">
    <property type="term" value="P:retinoid metabolic process"/>
    <property type="evidence" value="ECO:0000314"/>
    <property type="project" value="UniProtKB"/>
</dbReference>
<dbReference type="GO" id="GO:0042572">
    <property type="term" value="P:retinol metabolic process"/>
    <property type="evidence" value="ECO:0007669"/>
    <property type="project" value="UniProtKB-UniPathway"/>
</dbReference>
<dbReference type="GO" id="GO:0008202">
    <property type="term" value="P:steroid metabolic process"/>
    <property type="evidence" value="ECO:0000250"/>
    <property type="project" value="UniProtKB"/>
</dbReference>
<dbReference type="GO" id="GO:0007601">
    <property type="term" value="P:visual perception"/>
    <property type="evidence" value="ECO:0007669"/>
    <property type="project" value="UniProtKB-KW"/>
</dbReference>
<dbReference type="FunFam" id="3.40.50.720:FF:000074">
    <property type="entry name" value="Retinol dehydrogenase type 1"/>
    <property type="match status" value="1"/>
</dbReference>
<dbReference type="Gene3D" id="3.40.50.720">
    <property type="entry name" value="NAD(P)-binding Rossmann-like Domain"/>
    <property type="match status" value="1"/>
</dbReference>
<dbReference type="InterPro" id="IPR036291">
    <property type="entry name" value="NAD(P)-bd_dom_sf"/>
</dbReference>
<dbReference type="InterPro" id="IPR002347">
    <property type="entry name" value="SDR_fam"/>
</dbReference>
<dbReference type="PANTHER" id="PTHR43313:SF12">
    <property type="entry name" value="RETINOL DEHYDROGENASE 5"/>
    <property type="match status" value="1"/>
</dbReference>
<dbReference type="PANTHER" id="PTHR43313">
    <property type="entry name" value="SHORT-CHAIN DEHYDROGENASE/REDUCTASE FAMILY 9C"/>
    <property type="match status" value="1"/>
</dbReference>
<dbReference type="Pfam" id="PF00106">
    <property type="entry name" value="adh_short"/>
    <property type="match status" value="1"/>
</dbReference>
<dbReference type="PRINTS" id="PR00081">
    <property type="entry name" value="GDHRDH"/>
</dbReference>
<dbReference type="PRINTS" id="PR00080">
    <property type="entry name" value="SDRFAMILY"/>
</dbReference>
<dbReference type="SUPFAM" id="SSF51735">
    <property type="entry name" value="NAD(P)-binding Rossmann-fold domains"/>
    <property type="match status" value="1"/>
</dbReference>
<sequence length="318" mass="34826">MWLPLLLGALLWAVLWLLRDRQSLPASDAFIFITGCDSGFGRLLALQLDQKGFQVLAGCLTPSGAEDLQQMASSRLHTTLLDITDPQNVQQVAKWVKTRVGETGLFGLVNNAGVAGIIGPTPWLTQDDFQRVLSVNTLGPIGVTLALLPLLQQARGRVVNITSVLGRIAANGGGYCVSKFGLEAFSDSLRRDMAPFGVQVSIVEPGFFRTPVTNLESLESTLKACWARLPPAIQAHYGEAFLDTYLRVQRRIMNLICDPELTKVTSCLEHALTARHPRTRYSPGWDAKLLWLPASYLPARVVDAVLTWILPRPAQSVS</sequence>
<proteinExistence type="evidence at protein level"/>
<accession>O55240</accession>